<gene>
    <name evidence="1" type="primary">nrdI</name>
    <name type="ordered locus">ROP_64930</name>
</gene>
<dbReference type="EMBL" id="AP011115">
    <property type="protein sequence ID" value="BAH54740.1"/>
    <property type="molecule type" value="Genomic_DNA"/>
</dbReference>
<dbReference type="RefSeq" id="WP_015890189.1">
    <property type="nucleotide sequence ID" value="NC_012522.1"/>
</dbReference>
<dbReference type="SMR" id="C1B1P5"/>
<dbReference type="STRING" id="632772.ROP_64930"/>
<dbReference type="KEGG" id="rop:ROP_64930"/>
<dbReference type="PATRIC" id="fig|632772.20.peg.6779"/>
<dbReference type="HOGENOM" id="CLU_114845_0_0_11"/>
<dbReference type="OrthoDB" id="350535at2"/>
<dbReference type="Proteomes" id="UP000002212">
    <property type="component" value="Chromosome"/>
</dbReference>
<dbReference type="GO" id="GO:0010181">
    <property type="term" value="F:FMN binding"/>
    <property type="evidence" value="ECO:0007669"/>
    <property type="project" value="InterPro"/>
</dbReference>
<dbReference type="GO" id="GO:0036211">
    <property type="term" value="P:protein modification process"/>
    <property type="evidence" value="ECO:0007669"/>
    <property type="project" value="InterPro"/>
</dbReference>
<dbReference type="Gene3D" id="3.40.50.360">
    <property type="match status" value="1"/>
</dbReference>
<dbReference type="HAMAP" id="MF_00128">
    <property type="entry name" value="NrdI"/>
    <property type="match status" value="1"/>
</dbReference>
<dbReference type="InterPro" id="IPR029039">
    <property type="entry name" value="Flavoprotein-like_sf"/>
</dbReference>
<dbReference type="InterPro" id="IPR020852">
    <property type="entry name" value="RNR_Ib_NrdI_bac"/>
</dbReference>
<dbReference type="InterPro" id="IPR004465">
    <property type="entry name" value="RNR_NrdI"/>
</dbReference>
<dbReference type="NCBIfam" id="TIGR00333">
    <property type="entry name" value="nrdI"/>
    <property type="match status" value="1"/>
</dbReference>
<dbReference type="PANTHER" id="PTHR37297">
    <property type="entry name" value="PROTEIN NRDI"/>
    <property type="match status" value="1"/>
</dbReference>
<dbReference type="PANTHER" id="PTHR37297:SF1">
    <property type="entry name" value="PROTEIN NRDI"/>
    <property type="match status" value="1"/>
</dbReference>
<dbReference type="Pfam" id="PF07972">
    <property type="entry name" value="Flavodoxin_NdrI"/>
    <property type="match status" value="1"/>
</dbReference>
<dbReference type="PIRSF" id="PIRSF005087">
    <property type="entry name" value="NrdI"/>
    <property type="match status" value="1"/>
</dbReference>
<dbReference type="SUPFAM" id="SSF52218">
    <property type="entry name" value="Flavoproteins"/>
    <property type="match status" value="1"/>
</dbReference>
<feature type="chain" id="PRO_1000191761" description="Protein NrdI">
    <location>
        <begin position="1"/>
        <end position="152"/>
    </location>
</feature>
<sequence>MTSLVYFSSASENTHRFVQKLGVPATRIPLHDRAGTFEVDEPYVLILPTYGGGITATGRDTSYVPKQVIRFLNNTHNRSLIRGVIAAGNTNFGESYCYAGNVISQKCRVPYLYRFELMGTAEDVVAVLDGLEQFMESEQWHRQSQTQPRLGV</sequence>
<protein>
    <recommendedName>
        <fullName evidence="1">Protein NrdI</fullName>
    </recommendedName>
</protein>
<evidence type="ECO:0000255" key="1">
    <source>
        <dbReference type="HAMAP-Rule" id="MF_00128"/>
    </source>
</evidence>
<organism>
    <name type="scientific">Rhodococcus opacus (strain B4)</name>
    <dbReference type="NCBI Taxonomy" id="632772"/>
    <lineage>
        <taxon>Bacteria</taxon>
        <taxon>Bacillati</taxon>
        <taxon>Actinomycetota</taxon>
        <taxon>Actinomycetes</taxon>
        <taxon>Mycobacteriales</taxon>
        <taxon>Nocardiaceae</taxon>
        <taxon>Rhodococcus</taxon>
    </lineage>
</organism>
<accession>C1B1P5</accession>
<name>NRDI_RHOOB</name>
<comment type="function">
    <text evidence="1">Probably involved in ribonucleotide reductase function.</text>
</comment>
<comment type="similarity">
    <text evidence="1">Belongs to the NrdI family.</text>
</comment>
<reference key="1">
    <citation type="submission" date="2009-03" db="EMBL/GenBank/DDBJ databases">
        <title>Comparison of the complete genome sequences of Rhodococcus erythropolis PR4 and Rhodococcus opacus B4.</title>
        <authorList>
            <person name="Takarada H."/>
            <person name="Sekine M."/>
            <person name="Hosoyama A."/>
            <person name="Yamada R."/>
            <person name="Fujisawa T."/>
            <person name="Omata S."/>
            <person name="Shimizu A."/>
            <person name="Tsukatani N."/>
            <person name="Tanikawa S."/>
            <person name="Fujita N."/>
            <person name="Harayama S."/>
        </authorList>
    </citation>
    <scope>NUCLEOTIDE SEQUENCE [LARGE SCALE GENOMIC DNA]</scope>
    <source>
        <strain>B4</strain>
    </source>
</reference>
<proteinExistence type="inferred from homology"/>